<feature type="signal peptide" evidence="1">
    <location>
        <begin position="1"/>
        <end position="21"/>
    </location>
</feature>
<feature type="propeptide" id="PRO_0000026998">
    <location>
        <begin position="22"/>
        <end position="132"/>
    </location>
</feature>
<feature type="chain" id="PRO_0000026999" description="Extracellular basic protease">
    <location>
        <begin position="133"/>
        <end position="476"/>
    </location>
</feature>
<feature type="propeptide" id="PRO_0000027000">
    <location>
        <begin position="477"/>
        <end position="603"/>
    </location>
</feature>
<feature type="domain" description="Peptidase S8" evidence="3">
    <location>
        <begin position="143"/>
        <end position="468"/>
    </location>
</feature>
<feature type="domain" description="P/Homo B" evidence="2">
    <location>
        <begin position="478"/>
        <end position="603"/>
    </location>
</feature>
<feature type="region of interest" description="Disordered" evidence="4">
    <location>
        <begin position="197"/>
        <end position="221"/>
    </location>
</feature>
<feature type="active site" description="Charge relay system" evidence="3">
    <location>
        <position position="173"/>
    </location>
</feature>
<feature type="active site" description="Charge relay system" evidence="3">
    <location>
        <position position="237"/>
    </location>
</feature>
<feature type="active site" description="Charge relay system" evidence="3">
    <location>
        <position position="409"/>
    </location>
</feature>
<feature type="disulfide bond" evidence="5">
    <location>
        <begin position="221"/>
        <end position="273"/>
    </location>
</feature>
<feature type="disulfide bond" evidence="5">
    <location>
        <begin position="315"/>
        <end position="352"/>
    </location>
</feature>
<protein>
    <recommendedName>
        <fullName>Extracellular basic protease</fullName>
        <ecNumber>3.4.21.-</ecNumber>
    </recommendedName>
</protein>
<sequence length="603" mass="63869">MNLSNISAVKVLTLVVSAAIAGQVCAAESIVNYESANAISKQPEGSVRFIVKYKDGTPSSQGLKTRSTTKVMASGMQVAGFEAQFVRTTGLGAGIFAVPELKTTKEAHLVMDTIASNPDVEFVEVDRLAYPKAAPNDPSYRQQWHYFGNYGVKANKVWDRGFTGQGVVVSVVDTGILDHVDLNGNMLPGYDFISSAPNARDGDQRDNNPADEGDWFDNWDCGGYPDPRREKKFSTWHGSHVAGTIAAVTNNGVGVAGVAYGAKVIPVRVLGKCGGYDSDITDGMYWSAGGHIDGVPDNQNPAQVVNMSLGGGGGCSQNSQRMIDKTTNLGALIVIAAGNENQDASRTWPSSCNNVLSVGATTPKGKRAPFSNYGARVHLAAPGTNILSTIDVGQAGPVRSSYGMKAGTSMAAPHVSGVAALVISAANSIGKTLTPSELSDILVRTTSRFNGRLDRGLGSGIVDANAAVNAVLGDQNRAQPRPPVNQPINSGNKVYRSDRRVAIRDLRSVTSGIRVNDQARVGSANITLTLDIRYGDRSQLAVELIAPSGRVYPIYHDGKRQPNIVGPATFSVKNERLQGTWTLKVTDKARGVTGSIDSWSLTF</sequence>
<comment type="subcellular location">
    <subcellularLocation>
        <location>Secreted</location>
    </subcellularLocation>
</comment>
<comment type="similarity">
    <text evidence="6">Belongs to the peptidase S8 family.</text>
</comment>
<reference key="1">
    <citation type="journal article" date="1992" name="Eur. J. Biochem.">
        <title>Amino acid and DNA sequences of an extracellular basic protease of Dichelobacter nodosus show that it is a member of the subtilisin family of proteases.</title>
        <authorList>
            <person name="Lilley G.G."/>
            <person name="Stewart D.J."/>
            <person name="Kortt A.A."/>
        </authorList>
    </citation>
    <scope>NUCLEOTIDE SEQUENCE [GENOMIC DNA]</scope>
    <scope>PARTIAL PROTEIN SEQUENCE</scope>
    <source>
        <strain>VCS 1001 / A198</strain>
    </source>
</reference>
<name>BPRV_DICNO</name>
<accession>P42779</accession>
<gene>
    <name type="primary">bprV</name>
    <name type="synonym">bpr</name>
</gene>
<keyword id="KW-0903">Direct protein sequencing</keyword>
<keyword id="KW-1015">Disulfide bond</keyword>
<keyword id="KW-0378">Hydrolase</keyword>
<keyword id="KW-0645">Protease</keyword>
<keyword id="KW-0964">Secreted</keyword>
<keyword id="KW-0720">Serine protease</keyword>
<keyword id="KW-0732">Signal</keyword>
<keyword id="KW-0865">Zymogen</keyword>
<dbReference type="EC" id="3.4.21.-"/>
<dbReference type="EMBL" id="Z16080">
    <property type="protein sequence ID" value="CAA78894.1"/>
    <property type="molecule type" value="Genomic_DNA"/>
</dbReference>
<dbReference type="PIR" id="S27055">
    <property type="entry name" value="S27055"/>
</dbReference>
<dbReference type="SMR" id="P42779"/>
<dbReference type="MEROPS" id="S08.022"/>
<dbReference type="GO" id="GO:0005576">
    <property type="term" value="C:extracellular region"/>
    <property type="evidence" value="ECO:0007669"/>
    <property type="project" value="UniProtKB-SubCell"/>
</dbReference>
<dbReference type="GO" id="GO:0004252">
    <property type="term" value="F:serine-type endopeptidase activity"/>
    <property type="evidence" value="ECO:0007669"/>
    <property type="project" value="InterPro"/>
</dbReference>
<dbReference type="GO" id="GO:0006508">
    <property type="term" value="P:proteolysis"/>
    <property type="evidence" value="ECO:0007669"/>
    <property type="project" value="UniProtKB-KW"/>
</dbReference>
<dbReference type="CDD" id="cd07496">
    <property type="entry name" value="Peptidases_S8_13"/>
    <property type="match status" value="1"/>
</dbReference>
<dbReference type="FunFam" id="3.40.50.200:FF:000022">
    <property type="entry name" value="Extracellular protease"/>
    <property type="match status" value="1"/>
</dbReference>
<dbReference type="Gene3D" id="2.60.120.260">
    <property type="entry name" value="Galactose-binding domain-like"/>
    <property type="match status" value="1"/>
</dbReference>
<dbReference type="Gene3D" id="3.40.50.200">
    <property type="entry name" value="Peptidase S8/S53 domain"/>
    <property type="match status" value="1"/>
</dbReference>
<dbReference type="InterPro" id="IPR008979">
    <property type="entry name" value="Galactose-bd-like_sf"/>
</dbReference>
<dbReference type="InterPro" id="IPR002884">
    <property type="entry name" value="P_dom"/>
</dbReference>
<dbReference type="InterPro" id="IPR000209">
    <property type="entry name" value="Peptidase_S8/S53_dom"/>
</dbReference>
<dbReference type="InterPro" id="IPR036852">
    <property type="entry name" value="Peptidase_S8/S53_dom_sf"/>
</dbReference>
<dbReference type="InterPro" id="IPR023827">
    <property type="entry name" value="Peptidase_S8_Asp-AS"/>
</dbReference>
<dbReference type="InterPro" id="IPR022398">
    <property type="entry name" value="Peptidase_S8_His-AS"/>
</dbReference>
<dbReference type="InterPro" id="IPR023828">
    <property type="entry name" value="Peptidase_S8_Ser-AS"/>
</dbReference>
<dbReference type="InterPro" id="IPR050131">
    <property type="entry name" value="Peptidase_S8_subtilisin-like"/>
</dbReference>
<dbReference type="InterPro" id="IPR015500">
    <property type="entry name" value="Peptidase_S8_subtilisin-rel"/>
</dbReference>
<dbReference type="InterPro" id="IPR034176">
    <property type="entry name" value="Peptidases_S8_13"/>
</dbReference>
<dbReference type="PANTHER" id="PTHR43806:SF11">
    <property type="entry name" value="CEREVISIN-RELATED"/>
    <property type="match status" value="1"/>
</dbReference>
<dbReference type="PANTHER" id="PTHR43806">
    <property type="entry name" value="PEPTIDASE S8"/>
    <property type="match status" value="1"/>
</dbReference>
<dbReference type="Pfam" id="PF01483">
    <property type="entry name" value="P_proprotein"/>
    <property type="match status" value="1"/>
</dbReference>
<dbReference type="Pfam" id="PF00082">
    <property type="entry name" value="Peptidase_S8"/>
    <property type="match status" value="1"/>
</dbReference>
<dbReference type="PRINTS" id="PR00723">
    <property type="entry name" value="SUBTILISIN"/>
</dbReference>
<dbReference type="SUPFAM" id="SSF49785">
    <property type="entry name" value="Galactose-binding domain-like"/>
    <property type="match status" value="1"/>
</dbReference>
<dbReference type="SUPFAM" id="SSF52743">
    <property type="entry name" value="Subtilisin-like"/>
    <property type="match status" value="1"/>
</dbReference>
<dbReference type="PROSITE" id="PS51829">
    <property type="entry name" value="P_HOMO_B"/>
    <property type="match status" value="1"/>
</dbReference>
<dbReference type="PROSITE" id="PS51892">
    <property type="entry name" value="SUBTILASE"/>
    <property type="match status" value="1"/>
</dbReference>
<dbReference type="PROSITE" id="PS00136">
    <property type="entry name" value="SUBTILASE_ASP"/>
    <property type="match status" value="1"/>
</dbReference>
<dbReference type="PROSITE" id="PS00137">
    <property type="entry name" value="SUBTILASE_HIS"/>
    <property type="match status" value="1"/>
</dbReference>
<dbReference type="PROSITE" id="PS00138">
    <property type="entry name" value="SUBTILASE_SER"/>
    <property type="match status" value="1"/>
</dbReference>
<evidence type="ECO:0000255" key="1"/>
<evidence type="ECO:0000255" key="2">
    <source>
        <dbReference type="PROSITE-ProRule" id="PRU01173"/>
    </source>
</evidence>
<evidence type="ECO:0000255" key="3">
    <source>
        <dbReference type="PROSITE-ProRule" id="PRU01240"/>
    </source>
</evidence>
<evidence type="ECO:0000256" key="4">
    <source>
        <dbReference type="SAM" id="MobiDB-lite"/>
    </source>
</evidence>
<evidence type="ECO:0000269" key="5">
    <source>
    </source>
</evidence>
<evidence type="ECO:0000305" key="6"/>
<organism>
    <name type="scientific">Dichelobacter nodosus</name>
    <name type="common">Bacteroides nodosus</name>
    <dbReference type="NCBI Taxonomy" id="870"/>
    <lineage>
        <taxon>Bacteria</taxon>
        <taxon>Pseudomonadati</taxon>
        <taxon>Pseudomonadota</taxon>
        <taxon>Gammaproteobacteria</taxon>
        <taxon>Cardiobacteriales</taxon>
        <taxon>Cardiobacteriaceae</taxon>
        <taxon>Dichelobacter</taxon>
    </lineage>
</organism>
<proteinExistence type="evidence at protein level"/>